<organism>
    <name type="scientific">Gibberella zeae (strain ATCC MYA-4620 / CBS 123657 / FGSC 9075 / NRRL 31084 / PH-1)</name>
    <name type="common">Wheat head blight fungus</name>
    <name type="synonym">Fusarium graminearum</name>
    <dbReference type="NCBI Taxonomy" id="229533"/>
    <lineage>
        <taxon>Eukaryota</taxon>
        <taxon>Fungi</taxon>
        <taxon>Dikarya</taxon>
        <taxon>Ascomycota</taxon>
        <taxon>Pezizomycotina</taxon>
        <taxon>Sordariomycetes</taxon>
        <taxon>Hypocreomycetidae</taxon>
        <taxon>Hypocreales</taxon>
        <taxon>Nectriaceae</taxon>
        <taxon>Fusarium</taxon>
    </lineage>
</organism>
<proteinExistence type="inferred from homology"/>
<keyword id="KW-0378">Hydrolase</keyword>
<keyword id="KW-1185">Reference proteome</keyword>
<feature type="chain" id="PRO_0000450582" description="Probable thioesterase FGSG_00047">
    <location>
        <begin position="1"/>
        <end position="401"/>
    </location>
</feature>
<feature type="region of interest" description="Disordered" evidence="1">
    <location>
        <begin position="379"/>
        <end position="401"/>
    </location>
</feature>
<dbReference type="EC" id="3.1.-.-" evidence="5"/>
<dbReference type="EMBL" id="HG970332">
    <property type="protein sequence ID" value="CEF71876.1"/>
    <property type="molecule type" value="Genomic_DNA"/>
</dbReference>
<dbReference type="RefSeq" id="XP_011315636.1">
    <property type="nucleotide sequence ID" value="XM_011317334.1"/>
</dbReference>
<dbReference type="ESTHER" id="gibze-q4irw1">
    <property type="family name" value="Thioesterase"/>
</dbReference>
<dbReference type="GeneID" id="23547563"/>
<dbReference type="KEGG" id="fgr:FGSG_00047"/>
<dbReference type="VEuPathDB" id="FungiDB:FGRAMPH1_01G00153"/>
<dbReference type="eggNOG" id="ENOG502S3GI">
    <property type="taxonomic scope" value="Eukaryota"/>
</dbReference>
<dbReference type="HOGENOM" id="CLU_687061_0_0_1"/>
<dbReference type="InParanoid" id="I1R9B4"/>
<dbReference type="Proteomes" id="UP000070720">
    <property type="component" value="Chromosome 1"/>
</dbReference>
<dbReference type="GO" id="GO:0016787">
    <property type="term" value="F:hydrolase activity"/>
    <property type="evidence" value="ECO:0007669"/>
    <property type="project" value="UniProtKB-KW"/>
</dbReference>
<dbReference type="GO" id="GO:0009058">
    <property type="term" value="P:biosynthetic process"/>
    <property type="evidence" value="ECO:0007669"/>
    <property type="project" value="InterPro"/>
</dbReference>
<dbReference type="Gene3D" id="3.40.50.1820">
    <property type="entry name" value="alpha/beta hydrolase"/>
    <property type="match status" value="1"/>
</dbReference>
<dbReference type="InterPro" id="IPR029058">
    <property type="entry name" value="AB_hydrolase_fold"/>
</dbReference>
<dbReference type="InterPro" id="IPR001031">
    <property type="entry name" value="Thioesterase"/>
</dbReference>
<dbReference type="Pfam" id="PF00975">
    <property type="entry name" value="Thioesterase"/>
    <property type="match status" value="1"/>
</dbReference>
<dbReference type="SUPFAM" id="SSF53474">
    <property type="entry name" value="alpha/beta-Hydrolases"/>
    <property type="match status" value="1"/>
</dbReference>
<name>GRA14_GIBZE</name>
<protein>
    <recommendedName>
        <fullName evidence="3">Probable thioesterase FGSG_00047</fullName>
        <ecNumber evidence="5">3.1.-.-</ecNumber>
    </recommendedName>
    <alternativeName>
        <fullName evidence="3">Gramillins biosynthesis cluster protein FGSG_00047</fullName>
    </alternativeName>
</protein>
<evidence type="ECO:0000256" key="1">
    <source>
        <dbReference type="SAM" id="MobiDB-lite"/>
    </source>
</evidence>
<evidence type="ECO:0000269" key="2">
    <source>
    </source>
</evidence>
<evidence type="ECO:0000303" key="3">
    <source>
    </source>
</evidence>
<evidence type="ECO:0000305" key="4"/>
<evidence type="ECO:0000305" key="5">
    <source>
    </source>
</evidence>
<sequence>MEKSPDLVLIQATSIRSSNLPLFLIHGDDGDISKYFLLDPLDRNVYGIRNRCCDSAKAWPGGIPEMAKAYLDLIRAVKPRGEILLGGWSLGGLISLEIALVIARNQFSPLNVEGIIMIHTIFPSHQLRIEQVSKRPDSNADSHNGVGPCMIHNQRMIATWRPSPWPIRHIYTGLSDFESESPIVPQEPERISEIRYRQPPPPTILLRARHPASLVARCNNAGYCADTHCHRPMLGWESYREDFIVSIIDIEGNCFSIFDNNYVEGYISTDTLLDLHPICNRIAVVQFDAPVRLYLGLLVITLIDNKNNVMLFHYFTVRVNSDICIISIDLNLPSTGPISQTVNSKLAALASTTQGLNVPVLDLIFPTAAYTQLMSDTGAREMDQRKRQKDFTHTTIHDKNS</sequence>
<reference key="1">
    <citation type="journal article" date="2007" name="Science">
        <title>The Fusarium graminearum genome reveals a link between localized polymorphism and pathogen specialization.</title>
        <authorList>
            <person name="Cuomo C.A."/>
            <person name="Gueldener U."/>
            <person name="Xu J.-R."/>
            <person name="Trail F."/>
            <person name="Turgeon B.G."/>
            <person name="Di Pietro A."/>
            <person name="Walton J.D."/>
            <person name="Ma L.-J."/>
            <person name="Baker S.E."/>
            <person name="Rep M."/>
            <person name="Adam G."/>
            <person name="Antoniw J."/>
            <person name="Baldwin T."/>
            <person name="Calvo S.E."/>
            <person name="Chang Y.-L."/>
            <person name="DeCaprio D."/>
            <person name="Gale L.R."/>
            <person name="Gnerre S."/>
            <person name="Goswami R.S."/>
            <person name="Hammond-Kosack K."/>
            <person name="Harris L.J."/>
            <person name="Hilburn K."/>
            <person name="Kennell J.C."/>
            <person name="Kroken S."/>
            <person name="Magnuson J.K."/>
            <person name="Mannhaupt G."/>
            <person name="Mauceli E.W."/>
            <person name="Mewes H.-W."/>
            <person name="Mitterbauer R."/>
            <person name="Muehlbauer G."/>
            <person name="Muensterkoetter M."/>
            <person name="Nelson D."/>
            <person name="O'Donnell K."/>
            <person name="Ouellet T."/>
            <person name="Qi W."/>
            <person name="Quesneville H."/>
            <person name="Roncero M.I.G."/>
            <person name="Seong K.-Y."/>
            <person name="Tetko I.V."/>
            <person name="Urban M."/>
            <person name="Waalwijk C."/>
            <person name="Ward T.J."/>
            <person name="Yao J."/>
            <person name="Birren B.W."/>
            <person name="Kistler H.C."/>
        </authorList>
    </citation>
    <scope>NUCLEOTIDE SEQUENCE [LARGE SCALE GENOMIC DNA]</scope>
    <source>
        <strain>ATCC MYA-4620 / CBS 123657 / FGSC 9075 / NRRL 31084 / PH-1</strain>
    </source>
</reference>
<reference key="2">
    <citation type="journal article" date="2010" name="Nature">
        <title>Comparative genomics reveals mobile pathogenicity chromosomes in Fusarium.</title>
        <authorList>
            <person name="Ma L.-J."/>
            <person name="van der Does H.C."/>
            <person name="Borkovich K.A."/>
            <person name="Coleman J.J."/>
            <person name="Daboussi M.-J."/>
            <person name="Di Pietro A."/>
            <person name="Dufresne M."/>
            <person name="Freitag M."/>
            <person name="Grabherr M."/>
            <person name="Henrissat B."/>
            <person name="Houterman P.M."/>
            <person name="Kang S."/>
            <person name="Shim W.-B."/>
            <person name="Woloshuk C."/>
            <person name="Xie X."/>
            <person name="Xu J.-R."/>
            <person name="Antoniw J."/>
            <person name="Baker S.E."/>
            <person name="Bluhm B.H."/>
            <person name="Breakspear A."/>
            <person name="Brown D.W."/>
            <person name="Butchko R.A.E."/>
            <person name="Chapman S."/>
            <person name="Coulson R."/>
            <person name="Coutinho P.M."/>
            <person name="Danchin E.G.J."/>
            <person name="Diener A."/>
            <person name="Gale L.R."/>
            <person name="Gardiner D.M."/>
            <person name="Goff S."/>
            <person name="Hammond-Kosack K.E."/>
            <person name="Hilburn K."/>
            <person name="Hua-Van A."/>
            <person name="Jonkers W."/>
            <person name="Kazan K."/>
            <person name="Kodira C.D."/>
            <person name="Koehrsen M."/>
            <person name="Kumar L."/>
            <person name="Lee Y.-H."/>
            <person name="Li L."/>
            <person name="Manners J.M."/>
            <person name="Miranda-Saavedra D."/>
            <person name="Mukherjee M."/>
            <person name="Park G."/>
            <person name="Park J."/>
            <person name="Park S.-Y."/>
            <person name="Proctor R.H."/>
            <person name="Regev A."/>
            <person name="Ruiz-Roldan M.C."/>
            <person name="Sain D."/>
            <person name="Sakthikumar S."/>
            <person name="Sykes S."/>
            <person name="Schwartz D.C."/>
            <person name="Turgeon B.G."/>
            <person name="Wapinski I."/>
            <person name="Yoder O."/>
            <person name="Young S."/>
            <person name="Zeng Q."/>
            <person name="Zhou S."/>
            <person name="Galagan J."/>
            <person name="Cuomo C.A."/>
            <person name="Kistler H.C."/>
            <person name="Rep M."/>
        </authorList>
    </citation>
    <scope>GENOME REANNOTATION</scope>
    <source>
        <strain>ATCC MYA-4620 / CBS 123657 / FGSC 9075 / NRRL 31084 / PH-1</strain>
    </source>
</reference>
<reference key="3">
    <citation type="journal article" date="2015" name="BMC Genomics">
        <title>The completed genome sequence of the pathogenic ascomycete fungus Fusarium graminearum.</title>
        <authorList>
            <person name="King R."/>
            <person name="Urban M."/>
            <person name="Hammond-Kosack M.C.U."/>
            <person name="Hassani-Pak K."/>
            <person name="Hammond-Kosack K.E."/>
        </authorList>
    </citation>
    <scope>NUCLEOTIDE SEQUENCE [LARGE SCALE GENOMIC DNA]</scope>
    <source>
        <strain>ATCC MYA-4620 / CBS 123657 / FGSC 9075 / NRRL 31084 / PH-1</strain>
    </source>
</reference>
<reference key="4">
    <citation type="journal article" date="2018" name="J. Am. Chem. Soc.">
        <title>Gramillin A and B: cyclic lipopeptides identified as the nonribosomal biosynthetic products of Fusarium graminearum.</title>
        <authorList>
            <person name="Bahadoor A."/>
            <person name="Brauer E.K."/>
            <person name="Bosnich W."/>
            <person name="Schneiderman D."/>
            <person name="Johnston A."/>
            <person name="Aubin Y."/>
            <person name="Blackwell B."/>
            <person name="Melanson J.E."/>
            <person name="Harris L.J."/>
        </authorList>
    </citation>
    <scope>FUNCTION</scope>
    <scope>PATHWAY</scope>
</reference>
<accession>I1R9B4</accession>
<accession>A0A098D1P6</accession>
<comment type="function">
    <text evidence="2 5">Probable thioesterase; part of the gene cluster that mediates the biosynthesis of gramillins A and B, bicyclic lipopeptides that induce cell death in maize leaves but not in wheat leaves (PubMed:30395461). The nonribosomal peptide synthetase GRA1 incorporates respectively a glutamic adic (Glu), a leucine (Leu), a serine (Ser), a hydroxyglutamine (HOGln), a 2-amino decanoic acid, and 2 cysteins (CysB and CysA) (Probable). The biosynthesis of 2-amino decanoic acid incorporated in gramillins could be initiated by a fatty acid synthase composed of the alpha and beta subunits FGSG_00036 and FGSG_11656 (Probable). The cytochrome P450 monooxygenase FGSG_15680 could hydroxylate the fatty acid chain (Probable). Subsequent oxidation to the ketone by the oxidoreductase FGSG_00048 and transamination by aminotransferase FGSG_00049 could form 2-amino-decanoic acid (Probable). On the other hand, FGSG_15680 could also be responsible for the HO-modified glutamine at the gamma-position (Probable). Whether hydroxylation occurs on the fully assembled product or on the Gln residue prior to assembly into the gramillins requires further proof (Probable). The thioredoxin FGSG_00043 could also be required for the disulfide-bond formation between CysA and CysB (Probable). The specific involvement of the remaining proteins from the cluster is more difficult to discern, but could have broader regulatory (FGSG_00040 and FGSG_11657) or enzymatic functions (FGSG_00044 and FGSG_00045) (Probable). The final C-domain of GRA1 does not possess the expected sequence of a termination CT domain, often implicated in macrocyclization and release of a cyclopeptidein fungal NRPs; and the thioesterase FGSG_00047 may act in concert with the terminal C-domain of GRA1 to catalyze the formation of the macrocyclic anhydride and release of the products (Probable).</text>
</comment>
<comment type="pathway">
    <text evidence="5">Mycotoxin biosynthesis.</text>
</comment>
<comment type="similarity">
    <text evidence="4">Belongs to the AMT4 thioesterase family.</text>
</comment>
<gene>
    <name type="ORF">FG00047</name>
    <name type="ORF">FGRAMPH1_01T00153</name>
    <name type="ORF">FGSG_00047</name>
</gene>